<sequence>MSETNKNAFQAGQTAGKAEEKSNVLLDKAKDAAAGAGAGAQQAGKSVSDAAAGGVNFVKDKTGLNK</sequence>
<dbReference type="EMBL" id="X51474">
    <property type="protein sequence ID" value="CAA35838.1"/>
    <property type="molecule type" value="Genomic_DNA"/>
</dbReference>
<dbReference type="EMBL" id="AL391145">
    <property type="protein sequence ID" value="CAC01795.1"/>
    <property type="molecule type" value="Genomic_DNA"/>
</dbReference>
<dbReference type="EMBL" id="CP002688">
    <property type="protein sequence ID" value="AED92230.1"/>
    <property type="molecule type" value="Genomic_DNA"/>
</dbReference>
<dbReference type="EMBL" id="AY062849">
    <property type="protein sequence ID" value="AAL32927.1"/>
    <property type="molecule type" value="mRNA"/>
</dbReference>
<dbReference type="EMBL" id="AY114587">
    <property type="protein sequence ID" value="AAM47906.1"/>
    <property type="molecule type" value="mRNA"/>
</dbReference>
<dbReference type="EMBL" id="AY086226">
    <property type="protein sequence ID" value="AAM64302.1"/>
    <property type="molecule type" value="mRNA"/>
</dbReference>
<dbReference type="EMBL" id="Z17797">
    <property type="protein sequence ID" value="CAA79073.1"/>
    <property type="molecule type" value="mRNA"/>
</dbReference>
<dbReference type="PIR" id="S11155">
    <property type="entry name" value="S11155"/>
</dbReference>
<dbReference type="RefSeq" id="NP_197100.1">
    <property type="nucleotide sequence ID" value="NM_121601.3"/>
</dbReference>
<dbReference type="BioGRID" id="16729">
    <property type="interactions" value="4"/>
</dbReference>
<dbReference type="FunCoup" id="P18612">
    <property type="interactions" value="1"/>
</dbReference>
<dbReference type="STRING" id="3702.P18612"/>
<dbReference type="iPTMnet" id="P18612"/>
<dbReference type="PaxDb" id="3702-AT5G15960.1"/>
<dbReference type="ProteomicsDB" id="238215"/>
<dbReference type="EnsemblPlants" id="AT5G15960.1">
    <property type="protein sequence ID" value="AT5G15960.1"/>
    <property type="gene ID" value="AT5G15960"/>
</dbReference>
<dbReference type="GeneID" id="831453"/>
<dbReference type="Gramene" id="AT5G15960.1">
    <property type="protein sequence ID" value="AT5G15960.1"/>
    <property type="gene ID" value="AT5G15960"/>
</dbReference>
<dbReference type="KEGG" id="ath:AT5G15960"/>
<dbReference type="Araport" id="AT5G15960"/>
<dbReference type="TAIR" id="AT5G15960">
    <property type="gene designation" value="KIN1"/>
</dbReference>
<dbReference type="HOGENOM" id="CLU_173561_1_0_1"/>
<dbReference type="InParanoid" id="P18612"/>
<dbReference type="OMA" id="VSDPYTY"/>
<dbReference type="PhylomeDB" id="P18612"/>
<dbReference type="PRO" id="PR:P18612"/>
<dbReference type="Proteomes" id="UP000006548">
    <property type="component" value="Chromosome 5"/>
</dbReference>
<dbReference type="ExpressionAtlas" id="P18612">
    <property type="expression patterns" value="baseline and differential"/>
</dbReference>
<dbReference type="GO" id="GO:0005829">
    <property type="term" value="C:cytosol"/>
    <property type="evidence" value="ECO:0007005"/>
    <property type="project" value="TAIR"/>
</dbReference>
<dbReference type="GO" id="GO:0009631">
    <property type="term" value="P:cold acclimation"/>
    <property type="evidence" value="ECO:0000314"/>
    <property type="project" value="TAIR"/>
</dbReference>
<dbReference type="GO" id="GO:0010017">
    <property type="term" value="P:red or far-red light signaling pathway"/>
    <property type="evidence" value="ECO:0000270"/>
    <property type="project" value="TAIR"/>
</dbReference>
<dbReference type="GO" id="GO:0009737">
    <property type="term" value="P:response to abscisic acid"/>
    <property type="evidence" value="ECO:0000270"/>
    <property type="project" value="TAIR"/>
</dbReference>
<dbReference type="GO" id="GO:0009409">
    <property type="term" value="P:response to cold"/>
    <property type="evidence" value="ECO:0000270"/>
    <property type="project" value="TAIR"/>
</dbReference>
<dbReference type="GO" id="GO:0006970">
    <property type="term" value="P:response to osmotic stress"/>
    <property type="evidence" value="ECO:0000316"/>
    <property type="project" value="TAIR"/>
</dbReference>
<dbReference type="GO" id="GO:0009414">
    <property type="term" value="P:response to water deprivation"/>
    <property type="evidence" value="ECO:0000270"/>
    <property type="project" value="TAIR"/>
</dbReference>
<feature type="chain" id="PRO_0000155161" description="Stress-induced protein KIN1">
    <location>
        <begin position="1"/>
        <end position="66"/>
    </location>
</feature>
<feature type="repeat">
    <location>
        <begin position="31"/>
        <end position="35"/>
    </location>
</feature>
<feature type="repeat">
    <location>
        <begin position="49"/>
        <end position="53"/>
    </location>
</feature>
<feature type="region of interest" description="Disordered" evidence="1">
    <location>
        <begin position="1"/>
        <end position="52"/>
    </location>
</feature>
<feature type="compositionally biased region" description="Polar residues" evidence="1">
    <location>
        <begin position="1"/>
        <end position="13"/>
    </location>
</feature>
<feature type="compositionally biased region" description="Basic and acidic residues" evidence="1">
    <location>
        <begin position="17"/>
        <end position="31"/>
    </location>
</feature>
<feature type="compositionally biased region" description="Low complexity" evidence="1">
    <location>
        <begin position="32"/>
        <end position="45"/>
    </location>
</feature>
<protein>
    <recommendedName>
        <fullName>Stress-induced protein KIN1</fullName>
    </recommendedName>
</protein>
<proteinExistence type="evidence at transcript level"/>
<accession>P18612</accession>
<name>KIN1_ARATH</name>
<organism>
    <name type="scientific">Arabidopsis thaliana</name>
    <name type="common">Mouse-ear cress</name>
    <dbReference type="NCBI Taxonomy" id="3702"/>
    <lineage>
        <taxon>Eukaryota</taxon>
        <taxon>Viridiplantae</taxon>
        <taxon>Streptophyta</taxon>
        <taxon>Embryophyta</taxon>
        <taxon>Tracheophyta</taxon>
        <taxon>Spermatophyta</taxon>
        <taxon>Magnoliopsida</taxon>
        <taxon>eudicotyledons</taxon>
        <taxon>Gunneridae</taxon>
        <taxon>Pentapetalae</taxon>
        <taxon>rosids</taxon>
        <taxon>malvids</taxon>
        <taxon>Brassicales</taxon>
        <taxon>Brassicaceae</taxon>
        <taxon>Camelineae</taxon>
        <taxon>Arabidopsis</taxon>
    </lineage>
</organism>
<comment type="induction">
    <text>By cold stress, abscisic acid (ABA) and water stress.</text>
</comment>
<keyword id="KW-1185">Reference proteome</keyword>
<keyword id="KW-0677">Repeat</keyword>
<keyword id="KW-0346">Stress response</keyword>
<gene>
    <name type="primary">KIN1</name>
    <name type="ordered locus">At5g15960</name>
    <name type="ORF">F1N13_100</name>
</gene>
<reference key="1">
    <citation type="journal article" date="1990" name="Plant Mol. Biol.">
        <title>Cloning and characterization of a cold- and ABA-inducible Arabidopsis gene.</title>
        <authorList>
            <person name="Kurkela S."/>
            <person name="Franck M."/>
        </authorList>
    </citation>
    <scope>NUCLEOTIDE SEQUENCE [GENOMIC DNA]</scope>
    <source>
        <strain>cv. Columbia</strain>
    </source>
</reference>
<reference key="2">
    <citation type="journal article" date="2000" name="Nature">
        <title>Sequence and analysis of chromosome 5 of the plant Arabidopsis thaliana.</title>
        <authorList>
            <person name="Tabata S."/>
            <person name="Kaneko T."/>
            <person name="Nakamura Y."/>
            <person name="Kotani H."/>
            <person name="Kato T."/>
            <person name="Asamizu E."/>
            <person name="Miyajima N."/>
            <person name="Sasamoto S."/>
            <person name="Kimura T."/>
            <person name="Hosouchi T."/>
            <person name="Kawashima K."/>
            <person name="Kohara M."/>
            <person name="Matsumoto M."/>
            <person name="Matsuno A."/>
            <person name="Muraki A."/>
            <person name="Nakayama S."/>
            <person name="Nakazaki N."/>
            <person name="Naruo K."/>
            <person name="Okumura S."/>
            <person name="Shinpo S."/>
            <person name="Takeuchi C."/>
            <person name="Wada T."/>
            <person name="Watanabe A."/>
            <person name="Yamada M."/>
            <person name="Yasuda M."/>
            <person name="Sato S."/>
            <person name="de la Bastide M."/>
            <person name="Huang E."/>
            <person name="Spiegel L."/>
            <person name="Gnoj L."/>
            <person name="O'Shaughnessy A."/>
            <person name="Preston R."/>
            <person name="Habermann K."/>
            <person name="Murray J."/>
            <person name="Johnson D."/>
            <person name="Rohlfing T."/>
            <person name="Nelson J."/>
            <person name="Stoneking T."/>
            <person name="Pepin K."/>
            <person name="Spieth J."/>
            <person name="Sekhon M."/>
            <person name="Armstrong J."/>
            <person name="Becker M."/>
            <person name="Belter E."/>
            <person name="Cordum H."/>
            <person name="Cordes M."/>
            <person name="Courtney L."/>
            <person name="Courtney W."/>
            <person name="Dante M."/>
            <person name="Du H."/>
            <person name="Edwards J."/>
            <person name="Fryman J."/>
            <person name="Haakensen B."/>
            <person name="Lamar E."/>
            <person name="Latreille P."/>
            <person name="Leonard S."/>
            <person name="Meyer R."/>
            <person name="Mulvaney E."/>
            <person name="Ozersky P."/>
            <person name="Riley A."/>
            <person name="Strowmatt C."/>
            <person name="Wagner-McPherson C."/>
            <person name="Wollam A."/>
            <person name="Yoakum M."/>
            <person name="Bell M."/>
            <person name="Dedhia N."/>
            <person name="Parnell L."/>
            <person name="Shah R."/>
            <person name="Rodriguez M."/>
            <person name="Hoon See L."/>
            <person name="Vil D."/>
            <person name="Baker J."/>
            <person name="Kirchoff K."/>
            <person name="Toth K."/>
            <person name="King L."/>
            <person name="Bahret A."/>
            <person name="Miller B."/>
            <person name="Marra M.A."/>
            <person name="Martienssen R."/>
            <person name="McCombie W.R."/>
            <person name="Wilson R.K."/>
            <person name="Murphy G."/>
            <person name="Bancroft I."/>
            <person name="Volckaert G."/>
            <person name="Wambutt R."/>
            <person name="Duesterhoeft A."/>
            <person name="Stiekema W."/>
            <person name="Pohl T."/>
            <person name="Entian K.-D."/>
            <person name="Terryn N."/>
            <person name="Hartley N."/>
            <person name="Bent E."/>
            <person name="Johnson S."/>
            <person name="Langham S.-A."/>
            <person name="McCullagh B."/>
            <person name="Robben J."/>
            <person name="Grymonprez B."/>
            <person name="Zimmermann W."/>
            <person name="Ramsperger U."/>
            <person name="Wedler H."/>
            <person name="Balke K."/>
            <person name="Wedler E."/>
            <person name="Peters S."/>
            <person name="van Staveren M."/>
            <person name="Dirkse W."/>
            <person name="Mooijman P."/>
            <person name="Klein Lankhorst R."/>
            <person name="Weitzenegger T."/>
            <person name="Bothe G."/>
            <person name="Rose M."/>
            <person name="Hauf J."/>
            <person name="Berneiser S."/>
            <person name="Hempel S."/>
            <person name="Feldpausch M."/>
            <person name="Lamberth S."/>
            <person name="Villarroel R."/>
            <person name="Gielen J."/>
            <person name="Ardiles W."/>
            <person name="Bents O."/>
            <person name="Lemcke K."/>
            <person name="Kolesov G."/>
            <person name="Mayer K.F.X."/>
            <person name="Rudd S."/>
            <person name="Schoof H."/>
            <person name="Schueller C."/>
            <person name="Zaccaria P."/>
            <person name="Mewes H.-W."/>
            <person name="Bevan M."/>
            <person name="Fransz P.F."/>
        </authorList>
    </citation>
    <scope>NUCLEOTIDE SEQUENCE [LARGE SCALE GENOMIC DNA]</scope>
    <source>
        <strain>cv. Columbia</strain>
    </source>
</reference>
<reference key="3">
    <citation type="journal article" date="2017" name="Plant J.">
        <title>Araport11: a complete reannotation of the Arabidopsis thaliana reference genome.</title>
        <authorList>
            <person name="Cheng C.Y."/>
            <person name="Krishnakumar V."/>
            <person name="Chan A.P."/>
            <person name="Thibaud-Nissen F."/>
            <person name="Schobel S."/>
            <person name="Town C.D."/>
        </authorList>
    </citation>
    <scope>GENOME REANNOTATION</scope>
    <source>
        <strain>cv. Columbia</strain>
    </source>
</reference>
<reference key="4">
    <citation type="journal article" date="2003" name="Science">
        <title>Empirical analysis of transcriptional activity in the Arabidopsis genome.</title>
        <authorList>
            <person name="Yamada K."/>
            <person name="Lim J."/>
            <person name="Dale J.M."/>
            <person name="Chen H."/>
            <person name="Shinn P."/>
            <person name="Palm C.J."/>
            <person name="Southwick A.M."/>
            <person name="Wu H.C."/>
            <person name="Kim C.J."/>
            <person name="Nguyen M."/>
            <person name="Pham P.K."/>
            <person name="Cheuk R.F."/>
            <person name="Karlin-Newmann G."/>
            <person name="Liu S.X."/>
            <person name="Lam B."/>
            <person name="Sakano H."/>
            <person name="Wu T."/>
            <person name="Yu G."/>
            <person name="Miranda M."/>
            <person name="Quach H.L."/>
            <person name="Tripp M."/>
            <person name="Chang C.H."/>
            <person name="Lee J.M."/>
            <person name="Toriumi M.J."/>
            <person name="Chan M.M."/>
            <person name="Tang C.C."/>
            <person name="Onodera C.S."/>
            <person name="Deng J.M."/>
            <person name="Akiyama K."/>
            <person name="Ansari Y."/>
            <person name="Arakawa T."/>
            <person name="Banh J."/>
            <person name="Banno F."/>
            <person name="Bowser L."/>
            <person name="Brooks S.Y."/>
            <person name="Carninci P."/>
            <person name="Chao Q."/>
            <person name="Choy N."/>
            <person name="Enju A."/>
            <person name="Goldsmith A.D."/>
            <person name="Gurjal M."/>
            <person name="Hansen N.F."/>
            <person name="Hayashizaki Y."/>
            <person name="Johnson-Hopson C."/>
            <person name="Hsuan V.W."/>
            <person name="Iida K."/>
            <person name="Karnes M."/>
            <person name="Khan S."/>
            <person name="Koesema E."/>
            <person name="Ishida J."/>
            <person name="Jiang P.X."/>
            <person name="Jones T."/>
            <person name="Kawai J."/>
            <person name="Kamiya A."/>
            <person name="Meyers C."/>
            <person name="Nakajima M."/>
            <person name="Narusaka M."/>
            <person name="Seki M."/>
            <person name="Sakurai T."/>
            <person name="Satou M."/>
            <person name="Tamse R."/>
            <person name="Vaysberg M."/>
            <person name="Wallender E.K."/>
            <person name="Wong C."/>
            <person name="Yamamura Y."/>
            <person name="Yuan S."/>
            <person name="Shinozaki K."/>
            <person name="Davis R.W."/>
            <person name="Theologis A."/>
            <person name="Ecker J.R."/>
        </authorList>
    </citation>
    <scope>NUCLEOTIDE SEQUENCE [LARGE SCALE MRNA]</scope>
    <source>
        <strain>cv. Columbia</strain>
    </source>
</reference>
<reference key="5">
    <citation type="submission" date="2002-03" db="EMBL/GenBank/DDBJ databases">
        <title>Full-length cDNA from Arabidopsis thaliana.</title>
        <authorList>
            <person name="Brover V.V."/>
            <person name="Troukhan M.E."/>
            <person name="Alexandrov N.A."/>
            <person name="Lu Y.-P."/>
            <person name="Flavell R.B."/>
            <person name="Feldmann K.A."/>
        </authorList>
    </citation>
    <scope>NUCLEOTIDE SEQUENCE [LARGE SCALE MRNA]</scope>
</reference>
<reference key="6">
    <citation type="journal article" date="1993" name="Plant J.">
        <title>An inventory of 1152 expressed sequence tags obtained by partial sequencing of cDNAs from Arabidopsis thaliana.</title>
        <authorList>
            <person name="Hoefte H."/>
            <person name="Desprez T."/>
            <person name="Amselem J."/>
            <person name="Chiapello H."/>
            <person name="Rouze P."/>
            <person name="Caboche M."/>
            <person name="Moisan A."/>
            <person name="Jourjon M.-F."/>
            <person name="Charpenteau J.-L."/>
            <person name="Berthomieu P."/>
            <person name="Guerrier D."/>
            <person name="Giraudat J."/>
            <person name="Quigley F."/>
            <person name="Thomas F."/>
            <person name="Yu D.-Y."/>
            <person name="Mache R."/>
            <person name="Raynal M."/>
            <person name="Cooke R."/>
            <person name="Grellet F."/>
            <person name="Delseny M."/>
            <person name="Parmentier Y."/>
            <person name="de Marcillac G."/>
            <person name="Gigot C."/>
            <person name="Fleck J."/>
            <person name="Philipps G."/>
            <person name="Axelos M."/>
            <person name="Bardet C."/>
            <person name="Tremousaygue D."/>
            <person name="Lescure B."/>
        </authorList>
    </citation>
    <scope>NUCLEOTIDE SEQUENCE [LARGE SCALE MRNA]</scope>
    <source>
        <strain>cv. Columbia</strain>
        <tissue>Green siliques</tissue>
    </source>
</reference>
<evidence type="ECO:0000256" key="1">
    <source>
        <dbReference type="SAM" id="MobiDB-lite"/>
    </source>
</evidence>